<comment type="function">
    <text evidence="1">Encapsidates the genome, protecting it from nucleases. The encapsidated genomic RNA is termed the nucleocapsid (NC). Serves as template for viral transcription and replication. The increased presence of protein N in host cell does not seem to trigger the switch from transcription to replication as observed in other negative strain RNA viruses. Through the interaction with host IKBKE, strongly inhibits the phosphorylation and nuclear translocation of host IRF3, a protein involved in interferon activation pathway, leading to the inhibition of interferon-beta and IRF3-dependent promoters activation. Also encodes a functional 3'-5' exoribonuclease that degrades preferentially dsRNA substrates and thereby participates in the suppression of interferon induction.</text>
</comment>
<comment type="subunit">
    <text evidence="1 3">Homomultimerizes to form the nucleocapsid. Binds to viral genomic RNA. Interacts with glycoprotein G2. Interacts with protein Z; this interaction probably directs the encapsidated genome to budding sites. Interacts with protein L; this interaction does not interfere with Z-L interaction. Interacts with host IKBKE (via Protein kinase domain); the interaction inhibits IKBKE kinase activity.</text>
</comment>
<comment type="subcellular location">
    <subcellularLocation>
        <location evidence="1">Virion</location>
    </subcellularLocation>
    <subcellularLocation>
        <location evidence="1">Host cytoplasm</location>
    </subcellularLocation>
</comment>
<comment type="domain">
    <text evidence="1">The N-terminal region is important for the cap-binding activity while the C-terminal region contains the 3'-5' exoribonuclease activity. A CCHE zinc binding site is present in the C-terminal region and may thus contribute to the substrate binding and/or the specificity of the exonuclease activity.</text>
</comment>
<comment type="similarity">
    <text evidence="1">Belongs to the arenaviridae nucleocapsid protein family.</text>
</comment>
<reference key="1">
    <citation type="journal article" date="1987" name="Virus Res.">
        <title>Molecular structure and early events in the replication of Tacaribe arenavirus S RNA.</title>
        <authorList>
            <person name="Franze-Fernandez M.T."/>
            <person name="Zetina C."/>
            <person name="Iapalucci S."/>
            <person name="Lucero M.A."/>
            <person name="Bouissou C."/>
            <person name="Lopez R."/>
            <person name="Rey O."/>
            <person name="Daheli M."/>
            <person name="Cohen G.N."/>
            <person name="Zakin M.M."/>
        </authorList>
    </citation>
    <scope>NUCLEOTIDE SEQUENCE [GENOMIC RNA]</scope>
</reference>
<reference key="2">
    <citation type="journal article" date="2003" name="J. Virol.">
        <title>Tacaribe virus Z protein interacts with the L polymerase protein to inhibit viral RNA synthesis.</title>
        <authorList>
            <person name="Jacamo R."/>
            <person name="Lopez N."/>
            <person name="Wilda M."/>
            <person name="Franze-Fernandez M.T."/>
        </authorList>
    </citation>
    <scope>INTERACTION WITH PROLEIN L</scope>
</reference>
<reference key="3">
    <citation type="journal article" date="2013" name="J. Biol. Chem.">
        <title>Structures of arenaviral nucleoproteins with triphosphate dsRNA reveal a unique mechanism of immune suppression.</title>
        <authorList>
            <person name="Jiang X."/>
            <person name="Huang Q."/>
            <person name="Wang W."/>
            <person name="Dong H."/>
            <person name="Ly H."/>
            <person name="Liang Y."/>
            <person name="Dong C."/>
        </authorList>
    </citation>
    <scope>X-RAY CRYSTALLOGRAPHY (1.73 ANGSTROMS) OF 364-570</scope>
    <scope>ZINC BINDING</scope>
</reference>
<organismHost>
    <name type="scientific">Artibeus</name>
    <name type="common">neotropical fruit bats</name>
    <dbReference type="NCBI Taxonomy" id="9416"/>
</organismHost>
<keyword id="KW-0002">3D-structure</keyword>
<keyword id="KW-0167">Capsid protein</keyword>
<keyword id="KW-1139">Helical capsid protein</keyword>
<keyword id="KW-1035">Host cytoplasm</keyword>
<keyword id="KW-0945">Host-virus interaction</keyword>
<keyword id="KW-0378">Hydrolase</keyword>
<keyword id="KW-1224">Inhibition of host IKBKE by virus</keyword>
<keyword id="KW-1090">Inhibition of host innate immune response by virus</keyword>
<keyword id="KW-1113">Inhibition of host RLR pathway by virus</keyword>
<keyword id="KW-0922">Interferon antiviral system evasion</keyword>
<keyword id="KW-0464">Manganese</keyword>
<keyword id="KW-0479">Metal-binding</keyword>
<keyword id="KW-1185">Reference proteome</keyword>
<keyword id="KW-0687">Ribonucleoprotein</keyword>
<keyword id="KW-0694">RNA-binding</keyword>
<keyword id="KW-0899">Viral immunoevasion</keyword>
<keyword id="KW-0543">Viral nucleoprotein</keyword>
<keyword id="KW-0946">Virion</keyword>
<keyword id="KW-0862">Zinc</keyword>
<gene>
    <name evidence="1" type="primary">N</name>
</gene>
<protein>
    <recommendedName>
        <fullName evidence="1">Nucleoprotein</fullName>
        <ecNumber evidence="1">3.1.13.-</ecNumber>
    </recommendedName>
    <alternativeName>
        <fullName evidence="1">Nucleocapsid protein</fullName>
    </alternativeName>
    <alternativeName>
        <fullName evidence="1">Protein N</fullName>
    </alternativeName>
</protein>
<sequence length="570" mass="63811">MAQSKEVPSFRWTQSLRKGLSQFTQTVKSDILKDAKLIADSIDFNQVAQVQRVLRKTKRTDDDLNKLRDLNIEVDRLMSMKSVQKNTIFKVGDLARDELMELASDLEKLKDKIKRTESNGTNAYMGNLPQSQLNRRSEILRTLGFAQQGGRPNGIVRVWDVKDSSKLNNQFGSMPALTIACMTVQGGETMNNVVQALTSLGLLYTVKYPNLSDLDKLIPNHECLQIITKEESSINISGYNLSLLAAVKAGASILDGGNMLETIRVSPDNFSSLIKNTLQVKRREGMFIDDRPGSRNPYENLLYKLCLSGDGWPYIGSRSQIMGRSWDNTSVDLTKKPDAVPEPGAAPRPAERKGQNLRLASLTEGQELIVRAAISELDPSNTIWLDIEDLQLDPVELALYQPAKKQYIHCFRKPHDEKGFKNGSRHSHGILMKDIEDAVPGVLSYVIGLLPPNMVITTQGSDDIRKLLDIHGRKDLKLIDVKFTSDQARLFEHQVWDKFGHLCKQHNGVIISKKNKSKDSPPSPSPDEPHCALLDCIMFHSAVSGELPKEEPIPLLPKEFLFFPKTAFAL</sequence>
<evidence type="ECO:0000255" key="1">
    <source>
        <dbReference type="HAMAP-Rule" id="MF_04085"/>
    </source>
</evidence>
<evidence type="ECO:0000256" key="2">
    <source>
        <dbReference type="SAM" id="MobiDB-lite"/>
    </source>
</evidence>
<evidence type="ECO:0000269" key="3">
    <source>
    </source>
</evidence>
<evidence type="ECO:0000269" key="4">
    <source>
    </source>
</evidence>
<evidence type="ECO:0007829" key="5">
    <source>
        <dbReference type="PDB" id="4GVE"/>
    </source>
</evidence>
<accession>P18140</accession>
<dbReference type="EC" id="3.1.13.-" evidence="1"/>
<dbReference type="EMBL" id="M20304">
    <property type="protein sequence ID" value="AAA47903.1"/>
    <property type="molecule type" value="Genomic_RNA"/>
</dbReference>
<dbReference type="PDB" id="4GVE">
    <property type="method" value="X-ray"/>
    <property type="resolution" value="1.73 A"/>
    <property type="chains" value="A=364-570"/>
</dbReference>
<dbReference type="PDBsum" id="4GVE"/>
<dbReference type="SMR" id="P18140"/>
<dbReference type="KEGG" id="vg:956597"/>
<dbReference type="EvolutionaryTrace" id="P18140"/>
<dbReference type="Proteomes" id="UP000008026">
    <property type="component" value="Genome"/>
</dbReference>
<dbReference type="GO" id="GO:0019029">
    <property type="term" value="C:helical viral capsid"/>
    <property type="evidence" value="ECO:0007669"/>
    <property type="project" value="UniProtKB-UniRule"/>
</dbReference>
<dbReference type="GO" id="GO:0030430">
    <property type="term" value="C:host cell cytoplasm"/>
    <property type="evidence" value="ECO:0007669"/>
    <property type="project" value="UniProtKB-SubCell"/>
</dbReference>
<dbReference type="GO" id="GO:1990904">
    <property type="term" value="C:ribonucleoprotein complex"/>
    <property type="evidence" value="ECO:0007669"/>
    <property type="project" value="UniProtKB-KW"/>
</dbReference>
<dbReference type="GO" id="GO:0019013">
    <property type="term" value="C:viral nucleocapsid"/>
    <property type="evidence" value="ECO:0007669"/>
    <property type="project" value="UniProtKB-UniRule"/>
</dbReference>
<dbReference type="GO" id="GO:0016787">
    <property type="term" value="F:hydrolase activity"/>
    <property type="evidence" value="ECO:0007669"/>
    <property type="project" value="UniProtKB-KW"/>
</dbReference>
<dbReference type="GO" id="GO:0046872">
    <property type="term" value="F:metal ion binding"/>
    <property type="evidence" value="ECO:0007669"/>
    <property type="project" value="UniProtKB-UniRule"/>
</dbReference>
<dbReference type="GO" id="GO:0003723">
    <property type="term" value="F:RNA binding"/>
    <property type="evidence" value="ECO:0007669"/>
    <property type="project" value="UniProtKB-UniRule"/>
</dbReference>
<dbReference type="GO" id="GO:0039689">
    <property type="term" value="P:negative stranded viral RNA replication"/>
    <property type="evidence" value="ECO:0000250"/>
    <property type="project" value="UniProtKB"/>
</dbReference>
<dbReference type="GO" id="GO:0039696">
    <property type="term" value="P:RNA-templated viral transcription"/>
    <property type="evidence" value="ECO:0000250"/>
    <property type="project" value="UniProtKB"/>
</dbReference>
<dbReference type="GO" id="GO:0039724">
    <property type="term" value="P:symbiont-mediated suppression of host cytoplasmic pattern recognition receptor signaling pathway via inhibition of IKBKE activity"/>
    <property type="evidence" value="ECO:0007669"/>
    <property type="project" value="UniProtKB-UniRule"/>
</dbReference>
<dbReference type="FunFam" id="1.10.150.550:FF:000001">
    <property type="entry name" value="Nucleoprotein"/>
    <property type="match status" value="1"/>
</dbReference>
<dbReference type="FunFam" id="1.10.150.550:FF:000002">
    <property type="entry name" value="Nucleoprotein"/>
    <property type="match status" value="1"/>
</dbReference>
<dbReference type="FunFam" id="3.30.420.410:FF:000001">
    <property type="entry name" value="Nucleoprotein"/>
    <property type="match status" value="1"/>
</dbReference>
<dbReference type="Gene3D" id="3.30.420.410">
    <property type="entry name" value="Arenaviral nucleoprotein, C-terminal domain"/>
    <property type="match status" value="1"/>
</dbReference>
<dbReference type="Gene3D" id="1.10.150.550">
    <property type="entry name" value="Arenavirus nucleocapsid protein, head domain"/>
    <property type="match status" value="3"/>
</dbReference>
<dbReference type="HAMAP" id="MF_04085">
    <property type="entry name" value="ARENA_NCAP"/>
    <property type="match status" value="1"/>
</dbReference>
<dbReference type="InterPro" id="IPR000229">
    <property type="entry name" value="Nucleocapsid_arenaviridae"/>
</dbReference>
<dbReference type="InterPro" id="IPR035084">
    <property type="entry name" value="Nucleocapsid_C_arenaviridae"/>
</dbReference>
<dbReference type="InterPro" id="IPR038115">
    <property type="entry name" value="Nucleocapsid_C_sf"/>
</dbReference>
<dbReference type="InterPro" id="IPR035083">
    <property type="entry name" value="Nucleocapsid_N_arenaviridae"/>
</dbReference>
<dbReference type="Pfam" id="PF17290">
    <property type="entry name" value="Arena_ncap_C"/>
    <property type="match status" value="1"/>
</dbReference>
<dbReference type="Pfam" id="PF00843">
    <property type="entry name" value="Arena_nucleocap"/>
    <property type="match status" value="1"/>
</dbReference>
<dbReference type="PIRSF" id="PIRSF004029">
    <property type="entry name" value="N_ArenaV"/>
    <property type="match status" value="1"/>
</dbReference>
<name>NCAP_TACVF</name>
<organism>
    <name type="scientific">Tacaribe virus (strain Franze-Fernandez)</name>
    <name type="common">TCRV</name>
    <dbReference type="NCBI Taxonomy" id="928313"/>
    <lineage>
        <taxon>Viruses</taxon>
        <taxon>Riboviria</taxon>
        <taxon>Orthornavirae</taxon>
        <taxon>Negarnaviricota</taxon>
        <taxon>Polyploviricotina</taxon>
        <taxon>Ellioviricetes</taxon>
        <taxon>Bunyavirales</taxon>
        <taxon>Arenaviridae</taxon>
        <taxon>Mammarenavirus</taxon>
        <taxon>Tacaribe virus</taxon>
    </lineage>
</organism>
<proteinExistence type="evidence at protein level"/>
<feature type="chain" id="PRO_0000079197" description="Nucleoprotein">
    <location>
        <begin position="1"/>
        <end position="570"/>
    </location>
</feature>
<feature type="region of interest" description="Binding site for the cap structure m7GTP" evidence="1">
    <location>
        <begin position="54"/>
        <end position="236"/>
    </location>
</feature>
<feature type="region of interest" description="Disordered" evidence="2">
    <location>
        <begin position="332"/>
        <end position="356"/>
    </location>
</feature>
<feature type="binding site" evidence="4">
    <location>
        <position position="386"/>
    </location>
    <ligand>
        <name>Mg(2+)</name>
        <dbReference type="ChEBI" id="CHEBI:18420"/>
    </ligand>
</feature>
<feature type="binding site" evidence="1">
    <location>
        <position position="386"/>
    </location>
    <ligand>
        <name>Mn(2+)</name>
        <dbReference type="ChEBI" id="CHEBI:29035"/>
    </ligand>
</feature>
<feature type="binding site" evidence="4">
    <location>
        <position position="388"/>
    </location>
    <ligand>
        <name>Mg(2+)</name>
        <dbReference type="ChEBI" id="CHEBI:18420"/>
    </ligand>
</feature>
<feature type="binding site" evidence="1">
    <location>
        <position position="388"/>
    </location>
    <ligand>
        <name>Mn(2+)</name>
        <dbReference type="ChEBI" id="CHEBI:29035"/>
    </ligand>
</feature>
<feature type="binding site" evidence="1 4">
    <location>
        <position position="396"/>
    </location>
    <ligand>
        <name>Zn(2+)</name>
        <dbReference type="ChEBI" id="CHEBI:29105"/>
    </ligand>
</feature>
<feature type="binding site" evidence="1 4">
    <location>
        <position position="503"/>
    </location>
    <ligand>
        <name>Zn(2+)</name>
        <dbReference type="ChEBI" id="CHEBI:29105"/>
    </ligand>
</feature>
<feature type="binding site" evidence="1 4">
    <location>
        <position position="506"/>
    </location>
    <ligand>
        <name>Zn(2+)</name>
        <dbReference type="ChEBI" id="CHEBI:29105"/>
    </ligand>
</feature>
<feature type="binding site" evidence="1 4">
    <location>
        <position position="531"/>
    </location>
    <ligand>
        <name>Zn(2+)</name>
        <dbReference type="ChEBI" id="CHEBI:29105"/>
    </ligand>
</feature>
<feature type="binding site" evidence="4">
    <location>
        <position position="535"/>
    </location>
    <ligand>
        <name>Mg(2+)</name>
        <dbReference type="ChEBI" id="CHEBI:18420"/>
    </ligand>
</feature>
<feature type="binding site" evidence="1">
    <location>
        <position position="535"/>
    </location>
    <ligand>
        <name>Mn(2+)</name>
        <dbReference type="ChEBI" id="CHEBI:29035"/>
    </ligand>
</feature>
<feature type="site" description="Important for exonuclease activity" evidence="1">
    <location>
        <position position="463"/>
    </location>
</feature>
<feature type="helix" evidence="5">
    <location>
        <begin position="364"/>
        <end position="375"/>
    </location>
</feature>
<feature type="strand" evidence="5">
    <location>
        <begin position="384"/>
        <end position="389"/>
    </location>
</feature>
<feature type="strand" evidence="5">
    <location>
        <begin position="396"/>
        <end position="401"/>
    </location>
</feature>
<feature type="helix" evidence="5">
    <location>
        <begin position="402"/>
        <end position="404"/>
    </location>
</feature>
<feature type="strand" evidence="5">
    <location>
        <begin position="406"/>
        <end position="411"/>
    </location>
</feature>
<feature type="helix" evidence="5">
    <location>
        <begin position="417"/>
        <end position="426"/>
    </location>
</feature>
<feature type="helix" evidence="5">
    <location>
        <begin position="432"/>
        <end position="435"/>
    </location>
</feature>
<feature type="helix" evidence="5">
    <location>
        <begin position="442"/>
        <end position="449"/>
    </location>
</feature>
<feature type="strand" evidence="5">
    <location>
        <begin position="455"/>
        <end position="460"/>
    </location>
</feature>
<feature type="helix" evidence="5">
    <location>
        <begin position="461"/>
        <end position="470"/>
    </location>
</feature>
<feature type="strand" evidence="5">
    <location>
        <begin position="476"/>
        <end position="480"/>
    </location>
</feature>
<feature type="helix" evidence="5">
    <location>
        <begin position="485"/>
        <end position="488"/>
    </location>
</feature>
<feature type="turn" evidence="5">
    <location>
        <begin position="489"/>
        <end position="491"/>
    </location>
</feature>
<feature type="helix" evidence="5">
    <location>
        <begin position="492"/>
        <end position="499"/>
    </location>
</feature>
<feature type="helix" evidence="5">
    <location>
        <begin position="500"/>
        <end position="502"/>
    </location>
</feature>
<feature type="helix" evidence="5">
    <location>
        <begin position="532"/>
        <end position="544"/>
    </location>
</feature>
<feature type="strand" evidence="5">
    <location>
        <begin position="553"/>
        <end position="556"/>
    </location>
</feature>
<feature type="helix" evidence="5">
    <location>
        <begin position="558"/>
        <end position="560"/>
    </location>
</feature>